<comment type="function">
    <text evidence="1">Part of the ecpRABCDE operon, which encodes the E.coli common pilus (ECP). ECP is found in both commensal and pathogenic strains and plays a dual role in early-stage biofilm development and host cell recognition (By similarity).</text>
</comment>
<comment type="induction">
    <text evidence="3">Negatively regulated by H-NS. Positively regulated by IHF and EcpR.</text>
</comment>
<comment type="similarity">
    <text evidence="4">Belongs to the EcpB/EcpE family.</text>
</comment>
<comment type="sequence caution" evidence="4">
    <conflict type="erroneous initiation">
        <sequence resource="EMBL-CDS" id="AAG54614"/>
    </conflict>
    <text>Extended N-terminus.</text>
</comment>
<gene>
    <name type="primary">ecpE</name>
    <name type="synonym">yagV</name>
    <name type="ordered locus">Z0356</name>
    <name type="ordered locus">ECs0319</name>
</gene>
<organism>
    <name type="scientific">Escherichia coli O157:H7</name>
    <dbReference type="NCBI Taxonomy" id="83334"/>
    <lineage>
        <taxon>Bacteria</taxon>
        <taxon>Pseudomonadati</taxon>
        <taxon>Pseudomonadota</taxon>
        <taxon>Gammaproteobacteria</taxon>
        <taxon>Enterobacterales</taxon>
        <taxon>Enterobacteriaceae</taxon>
        <taxon>Escherichia</taxon>
    </lineage>
</organism>
<proteinExistence type="evidence at transcript level"/>
<reference key="1">
    <citation type="journal article" date="2001" name="DNA Res.">
        <title>Complete genome sequence of enterohemorrhagic Escherichia coli O157:H7 and genomic comparison with a laboratory strain K-12.</title>
        <authorList>
            <person name="Hayashi T."/>
            <person name="Makino K."/>
            <person name="Ohnishi M."/>
            <person name="Kurokawa K."/>
            <person name="Ishii K."/>
            <person name="Yokoyama K."/>
            <person name="Han C.-G."/>
            <person name="Ohtsubo E."/>
            <person name="Nakayama K."/>
            <person name="Murata T."/>
            <person name="Tanaka M."/>
            <person name="Tobe T."/>
            <person name="Iida T."/>
            <person name="Takami H."/>
            <person name="Honda T."/>
            <person name="Sasakawa C."/>
            <person name="Ogasawara N."/>
            <person name="Yasunaga T."/>
            <person name="Kuhara S."/>
            <person name="Shiba T."/>
            <person name="Hattori M."/>
            <person name="Shinagawa H."/>
        </authorList>
    </citation>
    <scope>NUCLEOTIDE SEQUENCE [LARGE SCALE GENOMIC DNA]</scope>
    <source>
        <strain>O157:H7 / Sakai / RIMD 0509952 / EHEC</strain>
    </source>
</reference>
<reference key="2">
    <citation type="journal article" date="2001" name="Nature">
        <title>Genome sequence of enterohaemorrhagic Escherichia coli O157:H7.</title>
        <authorList>
            <person name="Perna N.T."/>
            <person name="Plunkett G. III"/>
            <person name="Burland V."/>
            <person name="Mau B."/>
            <person name="Glasner J.D."/>
            <person name="Rose D.J."/>
            <person name="Mayhew G.F."/>
            <person name="Evans P.S."/>
            <person name="Gregor J."/>
            <person name="Kirkpatrick H.A."/>
            <person name="Posfai G."/>
            <person name="Hackett J."/>
            <person name="Klink S."/>
            <person name="Boutin A."/>
            <person name="Shao Y."/>
            <person name="Miller L."/>
            <person name="Grotbeck E.J."/>
            <person name="Davis N.W."/>
            <person name="Lim A."/>
            <person name="Dimalanta E.T."/>
            <person name="Potamousis K."/>
            <person name="Apodaca J."/>
            <person name="Anantharaman T.S."/>
            <person name="Lin J."/>
            <person name="Yen G."/>
            <person name="Schwartz D.C."/>
            <person name="Welch R.A."/>
            <person name="Blattner F.R."/>
        </authorList>
    </citation>
    <scope>NUCLEOTIDE SEQUENCE [LARGE SCALE GENOMIC DNA]</scope>
    <source>
        <strain>O157:H7 / EDL933 / ATCC 700927 / EHEC</strain>
    </source>
</reference>
<reference key="3">
    <citation type="journal article" date="2012" name="J. Bacteriol.">
        <title>Transcriptional regulation of the ecp operon by EcpR, IHF, and H-NS in attaching and effacing Escherichia coli.</title>
        <authorList>
            <person name="Martinez-Santos V.I."/>
            <person name="Medrano-Lopez A."/>
            <person name="Saldana Z."/>
            <person name="Giron J.A."/>
            <person name="Puente J.L."/>
        </authorList>
    </citation>
    <scope>INDUCTION</scope>
    <source>
        <strain>O157:H7 / EDL933 / ATCC 700927 / EHEC</strain>
    </source>
</reference>
<accession>Q8X6I6</accession>
<accession>Q7AHC4</accession>
<feature type="signal peptide" evidence="2">
    <location>
        <begin position="1"/>
        <end position="27"/>
    </location>
</feature>
<feature type="chain" id="PRO_0000429539" description="Probable fimbrial chaperone EcpE">
    <location>
        <begin position="28"/>
        <end position="236"/>
    </location>
</feature>
<evidence type="ECO:0000250" key="1"/>
<evidence type="ECO:0000255" key="2"/>
<evidence type="ECO:0000269" key="3">
    <source>
    </source>
</evidence>
<evidence type="ECO:0000305" key="4"/>
<name>ECPE_ECO57</name>
<dbReference type="EMBL" id="AE005174">
    <property type="protein sequence ID" value="AAG54614.1"/>
    <property type="status" value="ALT_INIT"/>
    <property type="molecule type" value="Genomic_DNA"/>
</dbReference>
<dbReference type="EMBL" id="BA000007">
    <property type="protein sequence ID" value="BAB33742.2"/>
    <property type="molecule type" value="Genomic_DNA"/>
</dbReference>
<dbReference type="PIR" id="B85519">
    <property type="entry name" value="B85519"/>
</dbReference>
<dbReference type="PIR" id="G90668">
    <property type="entry name" value="G90668"/>
</dbReference>
<dbReference type="RefSeq" id="NP_308346.2">
    <property type="nucleotide sequence ID" value="NC_002695.1"/>
</dbReference>
<dbReference type="RefSeq" id="WP_001301550.1">
    <property type="nucleotide sequence ID" value="NZ_VOAI01000033.1"/>
</dbReference>
<dbReference type="SMR" id="Q8X6I6"/>
<dbReference type="STRING" id="155864.Z0356"/>
<dbReference type="GeneID" id="914418"/>
<dbReference type="KEGG" id="ece:Z0356"/>
<dbReference type="KEGG" id="ecs:ECs_0319"/>
<dbReference type="PATRIC" id="fig|386585.9.peg.413"/>
<dbReference type="eggNOG" id="COG3121">
    <property type="taxonomic scope" value="Bacteria"/>
</dbReference>
<dbReference type="HOGENOM" id="CLU_106652_0_0_6"/>
<dbReference type="OMA" id="REVQFKW"/>
<dbReference type="Proteomes" id="UP000000558">
    <property type="component" value="Chromosome"/>
</dbReference>
<dbReference type="Proteomes" id="UP000002519">
    <property type="component" value="Chromosome"/>
</dbReference>
<dbReference type="Gene3D" id="2.60.40.10">
    <property type="entry name" value="Immunoglobulins"/>
    <property type="match status" value="1"/>
</dbReference>
<dbReference type="InterPro" id="IPR013783">
    <property type="entry name" value="Ig-like_fold"/>
</dbReference>
<dbReference type="InterPro" id="IPR008962">
    <property type="entry name" value="PapD-like_sf"/>
</dbReference>
<dbReference type="SUPFAM" id="SSF49354">
    <property type="entry name" value="PapD-like"/>
    <property type="match status" value="1"/>
</dbReference>
<sequence>MFRRRGVTLTKALLTAVCMLAAPLTQAISVGNLTFSLPSETDFVSKRVVNNNKSARIYRIAISAIDSPGSSELRTRPVDGELLFAPRQLALQAGESEYFKFYYHGPQDNRERYYRVSFREVPTRNLTKRSPTGGEVSTEPVVVMDTILVVRPRQVQFKWSFDQVTGTVSNTGNTWFKLLIKPGCDSTEEEGDAWYLRPEDVVHQPELRQPGNHYLVYNDKFIKISDSCPAKPPSAD</sequence>
<keyword id="KW-0143">Chaperone</keyword>
<keyword id="KW-1029">Fimbrium biogenesis</keyword>
<keyword id="KW-1185">Reference proteome</keyword>
<keyword id="KW-0732">Signal</keyword>
<protein>
    <recommendedName>
        <fullName>Probable fimbrial chaperone EcpE</fullName>
    </recommendedName>
</protein>